<dbReference type="EC" id="2.7.1.24" evidence="1"/>
<dbReference type="EMBL" id="AE017180">
    <property type="protein sequence ID" value="AAR33844.1"/>
    <property type="molecule type" value="Genomic_DNA"/>
</dbReference>
<dbReference type="RefSeq" id="NP_951571.1">
    <property type="nucleotide sequence ID" value="NC_002939.5"/>
</dbReference>
<dbReference type="RefSeq" id="WP_010941181.1">
    <property type="nucleotide sequence ID" value="NC_002939.5"/>
</dbReference>
<dbReference type="SMR" id="Q74FU2"/>
<dbReference type="FunCoup" id="Q74FU2">
    <property type="interactions" value="418"/>
</dbReference>
<dbReference type="STRING" id="243231.GSU0513"/>
<dbReference type="EnsemblBacteria" id="AAR33844">
    <property type="protein sequence ID" value="AAR33844"/>
    <property type="gene ID" value="GSU0513"/>
</dbReference>
<dbReference type="KEGG" id="gsu:GSU0513"/>
<dbReference type="PATRIC" id="fig|243231.5.peg.514"/>
<dbReference type="eggNOG" id="COG0237">
    <property type="taxonomic scope" value="Bacteria"/>
</dbReference>
<dbReference type="HOGENOM" id="CLU_057180_0_0_7"/>
<dbReference type="InParanoid" id="Q74FU2"/>
<dbReference type="OrthoDB" id="9812943at2"/>
<dbReference type="UniPathway" id="UPA00241">
    <property type="reaction ID" value="UER00356"/>
</dbReference>
<dbReference type="Proteomes" id="UP000000577">
    <property type="component" value="Chromosome"/>
</dbReference>
<dbReference type="GO" id="GO:0005737">
    <property type="term" value="C:cytoplasm"/>
    <property type="evidence" value="ECO:0007669"/>
    <property type="project" value="UniProtKB-SubCell"/>
</dbReference>
<dbReference type="GO" id="GO:0005524">
    <property type="term" value="F:ATP binding"/>
    <property type="evidence" value="ECO:0007669"/>
    <property type="project" value="UniProtKB-UniRule"/>
</dbReference>
<dbReference type="GO" id="GO:0004140">
    <property type="term" value="F:dephospho-CoA kinase activity"/>
    <property type="evidence" value="ECO:0000318"/>
    <property type="project" value="GO_Central"/>
</dbReference>
<dbReference type="GO" id="GO:0015937">
    <property type="term" value="P:coenzyme A biosynthetic process"/>
    <property type="evidence" value="ECO:0000318"/>
    <property type="project" value="GO_Central"/>
</dbReference>
<dbReference type="CDD" id="cd02022">
    <property type="entry name" value="DPCK"/>
    <property type="match status" value="1"/>
</dbReference>
<dbReference type="FunFam" id="3.40.50.300:FF:000991">
    <property type="entry name" value="Dephospho-CoA kinase"/>
    <property type="match status" value="1"/>
</dbReference>
<dbReference type="Gene3D" id="3.40.50.300">
    <property type="entry name" value="P-loop containing nucleotide triphosphate hydrolases"/>
    <property type="match status" value="1"/>
</dbReference>
<dbReference type="HAMAP" id="MF_00376">
    <property type="entry name" value="Dephospho_CoA_kinase"/>
    <property type="match status" value="1"/>
</dbReference>
<dbReference type="InterPro" id="IPR001977">
    <property type="entry name" value="Depp_CoAkinase"/>
</dbReference>
<dbReference type="InterPro" id="IPR027417">
    <property type="entry name" value="P-loop_NTPase"/>
</dbReference>
<dbReference type="NCBIfam" id="TIGR00152">
    <property type="entry name" value="dephospho-CoA kinase"/>
    <property type="match status" value="1"/>
</dbReference>
<dbReference type="PANTHER" id="PTHR10695:SF46">
    <property type="entry name" value="BIFUNCTIONAL COENZYME A SYNTHASE-RELATED"/>
    <property type="match status" value="1"/>
</dbReference>
<dbReference type="PANTHER" id="PTHR10695">
    <property type="entry name" value="DEPHOSPHO-COA KINASE-RELATED"/>
    <property type="match status" value="1"/>
</dbReference>
<dbReference type="Pfam" id="PF01121">
    <property type="entry name" value="CoaE"/>
    <property type="match status" value="1"/>
</dbReference>
<dbReference type="SUPFAM" id="SSF52540">
    <property type="entry name" value="P-loop containing nucleoside triphosphate hydrolases"/>
    <property type="match status" value="1"/>
</dbReference>
<dbReference type="PROSITE" id="PS51219">
    <property type="entry name" value="DPCK"/>
    <property type="match status" value="1"/>
</dbReference>
<proteinExistence type="inferred from homology"/>
<reference key="1">
    <citation type="journal article" date="2003" name="Science">
        <title>Genome of Geobacter sulfurreducens: metal reduction in subsurface environments.</title>
        <authorList>
            <person name="Methe B.A."/>
            <person name="Nelson K.E."/>
            <person name="Eisen J.A."/>
            <person name="Paulsen I.T."/>
            <person name="Nelson W.C."/>
            <person name="Heidelberg J.F."/>
            <person name="Wu D."/>
            <person name="Wu M."/>
            <person name="Ward N.L."/>
            <person name="Beanan M.J."/>
            <person name="Dodson R.J."/>
            <person name="Madupu R."/>
            <person name="Brinkac L.M."/>
            <person name="Daugherty S.C."/>
            <person name="DeBoy R.T."/>
            <person name="Durkin A.S."/>
            <person name="Gwinn M.L."/>
            <person name="Kolonay J.F."/>
            <person name="Sullivan S.A."/>
            <person name="Haft D.H."/>
            <person name="Selengut J."/>
            <person name="Davidsen T.M."/>
            <person name="Zafar N."/>
            <person name="White O."/>
            <person name="Tran B."/>
            <person name="Romero C."/>
            <person name="Forberger H.A."/>
            <person name="Weidman J.F."/>
            <person name="Khouri H.M."/>
            <person name="Feldblyum T.V."/>
            <person name="Utterback T.R."/>
            <person name="Van Aken S.E."/>
            <person name="Lovley D.R."/>
            <person name="Fraser C.M."/>
        </authorList>
    </citation>
    <scope>NUCLEOTIDE SEQUENCE [LARGE SCALE GENOMIC DNA]</scope>
    <source>
        <strain>ATCC 51573 / DSM 12127 / PCA</strain>
    </source>
</reference>
<feature type="chain" id="PRO_0000243292" description="Dephospho-CoA kinase">
    <location>
        <begin position="1"/>
        <end position="197"/>
    </location>
</feature>
<feature type="domain" description="DPCK" evidence="1">
    <location>
        <begin position="3"/>
        <end position="197"/>
    </location>
</feature>
<feature type="binding site" evidence="1">
    <location>
        <begin position="11"/>
        <end position="16"/>
    </location>
    <ligand>
        <name>ATP</name>
        <dbReference type="ChEBI" id="CHEBI:30616"/>
    </ligand>
</feature>
<protein>
    <recommendedName>
        <fullName evidence="1">Dephospho-CoA kinase</fullName>
        <ecNumber evidence="1">2.7.1.24</ecNumber>
    </recommendedName>
    <alternativeName>
        <fullName evidence="1">Dephosphocoenzyme A kinase</fullName>
    </alternativeName>
</protein>
<organism>
    <name type="scientific">Geobacter sulfurreducens (strain ATCC 51573 / DSM 12127 / PCA)</name>
    <dbReference type="NCBI Taxonomy" id="243231"/>
    <lineage>
        <taxon>Bacteria</taxon>
        <taxon>Pseudomonadati</taxon>
        <taxon>Thermodesulfobacteriota</taxon>
        <taxon>Desulfuromonadia</taxon>
        <taxon>Geobacterales</taxon>
        <taxon>Geobacteraceae</taxon>
        <taxon>Geobacter</taxon>
    </lineage>
</organism>
<accession>Q74FU2</accession>
<sequence>MNIIGLTGGIASGKSTVSRILERLGAVVIDADQLAREAVMPGTSAHRSIVAAFGEGILLPDGAIDRKALGSIIFADSSARKRLEAITHPAIRDLAELRLAELRRSGVPVAVYMAALLIEAGATDRVDEVWVVYVDRETQVRRVMARDGLSRSEAEQRLAAQMPMEEKAARGQVVIDNNGTPEELERRIEEIWAKRFP</sequence>
<evidence type="ECO:0000255" key="1">
    <source>
        <dbReference type="HAMAP-Rule" id="MF_00376"/>
    </source>
</evidence>
<gene>
    <name evidence="1" type="primary">coaE</name>
    <name type="ordered locus">GSU0513</name>
</gene>
<comment type="function">
    <text evidence="1">Catalyzes the phosphorylation of the 3'-hydroxyl group of dephosphocoenzyme A to form coenzyme A.</text>
</comment>
<comment type="catalytic activity">
    <reaction evidence="1">
        <text>3'-dephospho-CoA + ATP = ADP + CoA + H(+)</text>
        <dbReference type="Rhea" id="RHEA:18245"/>
        <dbReference type="ChEBI" id="CHEBI:15378"/>
        <dbReference type="ChEBI" id="CHEBI:30616"/>
        <dbReference type="ChEBI" id="CHEBI:57287"/>
        <dbReference type="ChEBI" id="CHEBI:57328"/>
        <dbReference type="ChEBI" id="CHEBI:456216"/>
        <dbReference type="EC" id="2.7.1.24"/>
    </reaction>
</comment>
<comment type="pathway">
    <text evidence="1">Cofactor biosynthesis; coenzyme A biosynthesis; CoA from (R)-pantothenate: step 5/5.</text>
</comment>
<comment type="subcellular location">
    <subcellularLocation>
        <location evidence="1">Cytoplasm</location>
    </subcellularLocation>
</comment>
<comment type="similarity">
    <text evidence="1">Belongs to the CoaE family.</text>
</comment>
<keyword id="KW-0067">ATP-binding</keyword>
<keyword id="KW-0173">Coenzyme A biosynthesis</keyword>
<keyword id="KW-0963">Cytoplasm</keyword>
<keyword id="KW-0418">Kinase</keyword>
<keyword id="KW-0547">Nucleotide-binding</keyword>
<keyword id="KW-1185">Reference proteome</keyword>
<keyword id="KW-0808">Transferase</keyword>
<name>COAE_GEOSL</name>